<evidence type="ECO:0000255" key="1">
    <source>
        <dbReference type="HAMAP-Rule" id="MF_00539"/>
    </source>
</evidence>
<evidence type="ECO:0000256" key="2">
    <source>
        <dbReference type="SAM" id="MobiDB-lite"/>
    </source>
</evidence>
<evidence type="ECO:0000305" key="3"/>
<feature type="chain" id="PRO_1000128717" description="Large ribosomal subunit protein bL27">
    <location>
        <begin position="1"/>
        <end position="84"/>
    </location>
</feature>
<feature type="region of interest" description="Disordered" evidence="2">
    <location>
        <begin position="1"/>
        <end position="21"/>
    </location>
</feature>
<sequence>MAHKKGGGSTKNGRDSNPQYLGVKAFGGQEVSAGSIIVRQRGTAFKPGKLVGIGRDHTIFALQSGKVFFRSGRNNKKFVDIIPA</sequence>
<name>RL27_CHLT3</name>
<organism>
    <name type="scientific">Chloroherpeton thalassium (strain ATCC 35110 / GB-78)</name>
    <dbReference type="NCBI Taxonomy" id="517418"/>
    <lineage>
        <taxon>Bacteria</taxon>
        <taxon>Pseudomonadati</taxon>
        <taxon>Chlorobiota</taxon>
        <taxon>Chlorobiia</taxon>
        <taxon>Chlorobiales</taxon>
        <taxon>Chloroherpetonaceae</taxon>
        <taxon>Chloroherpeton</taxon>
    </lineage>
</organism>
<protein>
    <recommendedName>
        <fullName evidence="1">Large ribosomal subunit protein bL27</fullName>
    </recommendedName>
    <alternativeName>
        <fullName evidence="3">50S ribosomal protein L27</fullName>
    </alternativeName>
</protein>
<gene>
    <name evidence="1" type="primary">rpmA</name>
    <name type="ordered locus">Ctha_0097</name>
</gene>
<accession>B3QSH7</accession>
<dbReference type="EMBL" id="CP001100">
    <property type="protein sequence ID" value="ACF12568.1"/>
    <property type="molecule type" value="Genomic_DNA"/>
</dbReference>
<dbReference type="RefSeq" id="WP_012498652.1">
    <property type="nucleotide sequence ID" value="NC_011026.1"/>
</dbReference>
<dbReference type="SMR" id="B3QSH7"/>
<dbReference type="STRING" id="517418.Ctha_0097"/>
<dbReference type="KEGG" id="cts:Ctha_0097"/>
<dbReference type="eggNOG" id="COG0211">
    <property type="taxonomic scope" value="Bacteria"/>
</dbReference>
<dbReference type="HOGENOM" id="CLU_095424_4_0_10"/>
<dbReference type="OrthoDB" id="9803474at2"/>
<dbReference type="Proteomes" id="UP000001208">
    <property type="component" value="Chromosome"/>
</dbReference>
<dbReference type="GO" id="GO:1990904">
    <property type="term" value="C:ribonucleoprotein complex"/>
    <property type="evidence" value="ECO:0007669"/>
    <property type="project" value="UniProtKB-KW"/>
</dbReference>
<dbReference type="GO" id="GO:0005840">
    <property type="term" value="C:ribosome"/>
    <property type="evidence" value="ECO:0007669"/>
    <property type="project" value="UniProtKB-KW"/>
</dbReference>
<dbReference type="GO" id="GO:0003735">
    <property type="term" value="F:structural constituent of ribosome"/>
    <property type="evidence" value="ECO:0007669"/>
    <property type="project" value="InterPro"/>
</dbReference>
<dbReference type="GO" id="GO:0006412">
    <property type="term" value="P:translation"/>
    <property type="evidence" value="ECO:0007669"/>
    <property type="project" value="UniProtKB-UniRule"/>
</dbReference>
<dbReference type="FunFam" id="2.40.50.100:FF:000020">
    <property type="entry name" value="50S ribosomal protein L27"/>
    <property type="match status" value="1"/>
</dbReference>
<dbReference type="Gene3D" id="2.40.50.100">
    <property type="match status" value="1"/>
</dbReference>
<dbReference type="HAMAP" id="MF_00539">
    <property type="entry name" value="Ribosomal_bL27"/>
    <property type="match status" value="1"/>
</dbReference>
<dbReference type="InterPro" id="IPR001684">
    <property type="entry name" value="Ribosomal_bL27"/>
</dbReference>
<dbReference type="InterPro" id="IPR018261">
    <property type="entry name" value="Ribosomal_bL27_CS"/>
</dbReference>
<dbReference type="NCBIfam" id="TIGR00062">
    <property type="entry name" value="L27"/>
    <property type="match status" value="1"/>
</dbReference>
<dbReference type="PANTHER" id="PTHR15893:SF0">
    <property type="entry name" value="LARGE RIBOSOMAL SUBUNIT PROTEIN BL27M"/>
    <property type="match status" value="1"/>
</dbReference>
<dbReference type="PANTHER" id="PTHR15893">
    <property type="entry name" value="RIBOSOMAL PROTEIN L27"/>
    <property type="match status" value="1"/>
</dbReference>
<dbReference type="Pfam" id="PF01016">
    <property type="entry name" value="Ribosomal_L27"/>
    <property type="match status" value="1"/>
</dbReference>
<dbReference type="PRINTS" id="PR00063">
    <property type="entry name" value="RIBOSOMALL27"/>
</dbReference>
<dbReference type="SUPFAM" id="SSF110324">
    <property type="entry name" value="Ribosomal L27 protein-like"/>
    <property type="match status" value="1"/>
</dbReference>
<dbReference type="PROSITE" id="PS00831">
    <property type="entry name" value="RIBOSOMAL_L27"/>
    <property type="match status" value="1"/>
</dbReference>
<comment type="similarity">
    <text evidence="1">Belongs to the bacterial ribosomal protein bL27 family.</text>
</comment>
<keyword id="KW-1185">Reference proteome</keyword>
<keyword id="KW-0687">Ribonucleoprotein</keyword>
<keyword id="KW-0689">Ribosomal protein</keyword>
<proteinExistence type="inferred from homology"/>
<reference key="1">
    <citation type="submission" date="2008-06" db="EMBL/GenBank/DDBJ databases">
        <title>Complete sequence of Chloroherpeton thalassium ATCC 35110.</title>
        <authorList>
            <consortium name="US DOE Joint Genome Institute"/>
            <person name="Lucas S."/>
            <person name="Copeland A."/>
            <person name="Lapidus A."/>
            <person name="Glavina del Rio T."/>
            <person name="Dalin E."/>
            <person name="Tice H."/>
            <person name="Bruce D."/>
            <person name="Goodwin L."/>
            <person name="Pitluck S."/>
            <person name="Schmutz J."/>
            <person name="Larimer F."/>
            <person name="Land M."/>
            <person name="Hauser L."/>
            <person name="Kyrpides N."/>
            <person name="Mikhailova N."/>
            <person name="Liu Z."/>
            <person name="Li T."/>
            <person name="Zhao F."/>
            <person name="Overmann J."/>
            <person name="Bryant D.A."/>
            <person name="Richardson P."/>
        </authorList>
    </citation>
    <scope>NUCLEOTIDE SEQUENCE [LARGE SCALE GENOMIC DNA]</scope>
    <source>
        <strain>ATCC 35110 / GB-78</strain>
    </source>
</reference>